<evidence type="ECO:0000250" key="1"/>
<evidence type="ECO:0000250" key="2">
    <source>
        <dbReference type="UniProtKB" id="P02572"/>
    </source>
</evidence>
<evidence type="ECO:0000250" key="3">
    <source>
        <dbReference type="UniProtKB" id="P68134"/>
    </source>
</evidence>
<evidence type="ECO:0000250" key="4">
    <source>
        <dbReference type="UniProtKB" id="P68137"/>
    </source>
</evidence>
<evidence type="ECO:0000269" key="5">
    <source>
    </source>
</evidence>
<evidence type="ECO:0000269" key="6">
    <source>
    </source>
</evidence>
<evidence type="ECO:0000269" key="7">
    <source>
    </source>
</evidence>
<evidence type="ECO:0000305" key="8"/>
<evidence type="ECO:0007829" key="9">
    <source>
        <dbReference type="PDB" id="2HF3"/>
    </source>
</evidence>
<evidence type="ECO:0007829" key="10">
    <source>
        <dbReference type="PDB" id="3EKS"/>
    </source>
</evidence>
<evidence type="ECO:0007829" key="11">
    <source>
        <dbReference type="PDB" id="3MMV"/>
    </source>
</evidence>
<evidence type="ECO:0007829" key="12">
    <source>
        <dbReference type="PDB" id="3MN6"/>
    </source>
</evidence>
<evidence type="ECO:0007829" key="13">
    <source>
        <dbReference type="PDB" id="4M63"/>
    </source>
</evidence>
<evidence type="ECO:0007829" key="14">
    <source>
        <dbReference type="PDB" id="4RWT"/>
    </source>
</evidence>
<keyword id="KW-0002">3D-structure</keyword>
<keyword id="KW-0007">Acetylation</keyword>
<keyword id="KW-0067">ATP-binding</keyword>
<keyword id="KW-0963">Cytoplasm</keyword>
<keyword id="KW-0206">Cytoskeleton</keyword>
<keyword id="KW-0378">Hydrolase</keyword>
<keyword id="KW-0488">Methylation</keyword>
<keyword id="KW-0547">Nucleotide-binding</keyword>
<keyword id="KW-0558">Oxidation</keyword>
<keyword id="KW-1185">Reference proteome</keyword>
<proteinExistence type="evidence at protein level"/>
<organism>
    <name type="scientific">Drosophila melanogaster</name>
    <name type="common">Fruit fly</name>
    <dbReference type="NCBI Taxonomy" id="7227"/>
    <lineage>
        <taxon>Eukaryota</taxon>
        <taxon>Metazoa</taxon>
        <taxon>Ecdysozoa</taxon>
        <taxon>Arthropoda</taxon>
        <taxon>Hexapoda</taxon>
        <taxon>Insecta</taxon>
        <taxon>Pterygota</taxon>
        <taxon>Neoptera</taxon>
        <taxon>Endopterygota</taxon>
        <taxon>Diptera</taxon>
        <taxon>Brachycera</taxon>
        <taxon>Muscomorpha</taxon>
        <taxon>Ephydroidea</taxon>
        <taxon>Drosophilidae</taxon>
        <taxon>Drosophila</taxon>
        <taxon>Sophophora</taxon>
    </lineage>
</organism>
<feature type="propeptide" id="PRO_0000000656" description="Removed in mature form" evidence="1">
    <location>
        <begin position="1"/>
        <end position="2"/>
    </location>
</feature>
<feature type="chain" id="PRO_0000000657" description="Actin-5C">
    <location>
        <begin position="3"/>
        <end position="376"/>
    </location>
</feature>
<feature type="modified residue" description="N-acetylaspartate" evidence="1">
    <location>
        <position position="3"/>
    </location>
</feature>
<feature type="modified residue" description="Methionine sulfoxide" evidence="5">
    <location>
        <position position="45"/>
    </location>
</feature>
<feature type="modified residue" description="Methionine sulfoxide" evidence="5">
    <location>
        <position position="48"/>
    </location>
</feature>
<feature type="modified residue" description="Tele-methylhistidine" evidence="2">
    <location>
        <position position="74"/>
    </location>
</feature>
<feature type="mutagenesis site" description="Abolishes formation of methionine-sulfoxide and subsequent depolymerization." evidence="5">
    <original>M</original>
    <variation>L</variation>
    <location>
        <position position="45"/>
    </location>
</feature>
<feature type="mutagenesis site" description="Depolymerizes in the presence of Mical." evidence="5">
    <original>M</original>
    <variation>L</variation>
    <location>
        <position position="48"/>
    </location>
</feature>
<feature type="sequence conflict" description="In Ref. 1; AAA28316." evidence="8" ref="1">
    <original>Q</original>
    <variation>H</variation>
    <location>
        <position position="264"/>
    </location>
</feature>
<feature type="sequence conflict" description="In Ref. 1; AAA28316." evidence="8" ref="1">
    <original>A</original>
    <variation>S</variation>
    <location>
        <position position="272"/>
    </location>
</feature>
<feature type="sequence conflict" description="In Ref. 1; AAA28316." evidence="8" ref="1">
    <original>L</original>
    <variation>S</variation>
    <location>
        <position position="350"/>
    </location>
</feature>
<feature type="sequence conflict" description="In Ref. 1; AAA28316." evidence="8" ref="1">
    <original>I</original>
    <variation>T</variation>
    <location>
        <position position="358"/>
    </location>
</feature>
<feature type="sequence conflict" description="In Ref. 8; CAA30474." evidence="8" ref="8">
    <original>SG</original>
    <variation>AW</variation>
    <location>
        <begin position="366"/>
        <end position="367"/>
    </location>
</feature>
<feature type="strand" evidence="9">
    <location>
        <begin position="9"/>
        <end position="12"/>
    </location>
</feature>
<feature type="strand" evidence="9">
    <location>
        <begin position="15"/>
        <end position="22"/>
    </location>
</feature>
<feature type="strand" evidence="12">
    <location>
        <begin position="25"/>
        <end position="27"/>
    </location>
</feature>
<feature type="strand" evidence="9">
    <location>
        <begin position="29"/>
        <end position="34"/>
    </location>
</feature>
<feature type="strand" evidence="9">
    <location>
        <begin position="36"/>
        <end position="39"/>
    </location>
</feature>
<feature type="strand" evidence="14">
    <location>
        <begin position="41"/>
        <end position="43"/>
    </location>
</feature>
<feature type="strand" evidence="10">
    <location>
        <begin position="46"/>
        <end position="48"/>
    </location>
</feature>
<feature type="strand" evidence="11">
    <location>
        <begin position="54"/>
        <end position="56"/>
    </location>
</feature>
<feature type="helix" evidence="9">
    <location>
        <begin position="57"/>
        <end position="61"/>
    </location>
</feature>
<feature type="helix" evidence="9">
    <location>
        <begin position="63"/>
        <end position="65"/>
    </location>
</feature>
<feature type="strand" evidence="9">
    <location>
        <begin position="66"/>
        <end position="69"/>
    </location>
</feature>
<feature type="turn" evidence="9">
    <location>
        <begin position="71"/>
        <end position="74"/>
    </location>
</feature>
<feature type="strand" evidence="13">
    <location>
        <begin position="76"/>
        <end position="78"/>
    </location>
</feature>
<feature type="helix" evidence="9">
    <location>
        <begin position="80"/>
        <end position="92"/>
    </location>
</feature>
<feature type="turn" evidence="9">
    <location>
        <begin position="93"/>
        <end position="95"/>
    </location>
</feature>
<feature type="helix" evidence="9">
    <location>
        <begin position="99"/>
        <end position="101"/>
    </location>
</feature>
<feature type="strand" evidence="9">
    <location>
        <begin position="104"/>
        <end position="108"/>
    </location>
</feature>
<feature type="helix" evidence="9">
    <location>
        <begin position="114"/>
        <end position="126"/>
    </location>
</feature>
<feature type="strand" evidence="9">
    <location>
        <begin position="131"/>
        <end position="137"/>
    </location>
</feature>
<feature type="helix" evidence="9">
    <location>
        <begin position="138"/>
        <end position="145"/>
    </location>
</feature>
<feature type="strand" evidence="9">
    <location>
        <begin position="149"/>
        <end position="156"/>
    </location>
</feature>
<feature type="strand" evidence="9">
    <location>
        <begin position="161"/>
        <end position="167"/>
    </location>
</feature>
<feature type="helix" evidence="9">
    <location>
        <begin position="173"/>
        <end position="175"/>
    </location>
</feature>
<feature type="strand" evidence="9">
    <location>
        <begin position="177"/>
        <end position="180"/>
    </location>
</feature>
<feature type="helix" evidence="9">
    <location>
        <begin position="183"/>
        <end position="197"/>
    </location>
</feature>
<feature type="helix" evidence="9">
    <location>
        <begin position="204"/>
        <end position="217"/>
    </location>
</feature>
<feature type="helix" evidence="9">
    <location>
        <begin position="224"/>
        <end position="233"/>
    </location>
</feature>
<feature type="strand" evidence="9">
    <location>
        <begin position="239"/>
        <end position="242"/>
    </location>
</feature>
<feature type="strand" evidence="9">
    <location>
        <begin position="248"/>
        <end position="251"/>
    </location>
</feature>
<feature type="helix" evidence="9">
    <location>
        <begin position="254"/>
        <end position="260"/>
    </location>
</feature>
<feature type="turn" evidence="9">
    <location>
        <begin position="261"/>
        <end position="263"/>
    </location>
</feature>
<feature type="helix" evidence="9">
    <location>
        <begin position="265"/>
        <end position="268"/>
    </location>
</feature>
<feature type="helix" evidence="9">
    <location>
        <begin position="275"/>
        <end position="284"/>
    </location>
</feature>
<feature type="helix" evidence="9">
    <location>
        <begin position="288"/>
        <end position="290"/>
    </location>
</feature>
<feature type="helix" evidence="9">
    <location>
        <begin position="291"/>
        <end position="295"/>
    </location>
</feature>
<feature type="strand" evidence="9">
    <location>
        <begin position="298"/>
        <end position="302"/>
    </location>
</feature>
<feature type="helix" evidence="9">
    <location>
        <begin position="303"/>
        <end position="305"/>
    </location>
</feature>
<feature type="helix" evidence="9">
    <location>
        <begin position="310"/>
        <end position="321"/>
    </location>
</feature>
<feature type="helix" evidence="9">
    <location>
        <begin position="336"/>
        <end position="338"/>
    </location>
</feature>
<feature type="helix" evidence="9">
    <location>
        <begin position="339"/>
        <end position="348"/>
    </location>
</feature>
<feature type="helix" evidence="9">
    <location>
        <begin position="351"/>
        <end position="356"/>
    </location>
</feature>
<feature type="strand" evidence="9">
    <location>
        <begin position="357"/>
        <end position="359"/>
    </location>
</feature>
<feature type="helix" evidence="9">
    <location>
        <begin position="360"/>
        <end position="366"/>
    </location>
</feature>
<feature type="helix" evidence="9">
    <location>
        <begin position="370"/>
        <end position="374"/>
    </location>
</feature>
<accession>P10987</accession>
<accession>A4V404</accession>
<accession>Q24227</accession>
<accession>Q6YN46</accession>
<accession>Q9U5X7</accession>
<accession>Q9W460</accession>
<dbReference type="EC" id="3.6.4.-" evidence="4"/>
<dbReference type="EMBL" id="K00667">
    <property type="protein sequence ID" value="AAA28316.1"/>
    <property type="molecule type" value="Genomic_DNA"/>
</dbReference>
<dbReference type="EMBL" id="AE014298">
    <property type="protein sequence ID" value="AAF46098.1"/>
    <property type="molecule type" value="Genomic_DNA"/>
</dbReference>
<dbReference type="EMBL" id="AE014298">
    <property type="protein sequence ID" value="AAN09154.1"/>
    <property type="molecule type" value="Genomic_DNA"/>
</dbReference>
<dbReference type="EMBL" id="AE014298">
    <property type="protein sequence ID" value="AAX52479.1"/>
    <property type="molecule type" value="Genomic_DNA"/>
</dbReference>
<dbReference type="EMBL" id="AE014298">
    <property type="protein sequence ID" value="AAX52480.1"/>
    <property type="molecule type" value="Genomic_DNA"/>
</dbReference>
<dbReference type="EMBL" id="AY089562">
    <property type="protein sequence ID" value="AAL90300.1"/>
    <property type="molecule type" value="mRNA"/>
</dbReference>
<dbReference type="EMBL" id="X06383">
    <property type="protein sequence ID" value="CAA29681.1"/>
    <property type="molecule type" value="Genomic_DNA"/>
</dbReference>
<dbReference type="EMBL" id="X06384">
    <property type="protein sequence ID" value="CAB61444.1"/>
    <property type="molecule type" value="Genomic_DNA"/>
</dbReference>
<dbReference type="EMBL" id="M13587">
    <property type="protein sequence ID" value="AAA28315.1"/>
    <property type="molecule type" value="Genomic_DNA"/>
</dbReference>
<dbReference type="EMBL" id="X07627">
    <property type="protein sequence ID" value="CAA30474.1"/>
    <property type="molecule type" value="Genomic_DNA"/>
</dbReference>
<dbReference type="PIR" id="A28258">
    <property type="entry name" value="A28258"/>
</dbReference>
<dbReference type="RefSeq" id="NP_001014725.1">
    <property type="nucleotide sequence ID" value="NM_001014725.2"/>
</dbReference>
<dbReference type="RefSeq" id="NP_001014726.1">
    <property type="nucleotide sequence ID" value="NM_001014726.2"/>
</dbReference>
<dbReference type="RefSeq" id="NP_001284915.1">
    <property type="nucleotide sequence ID" value="NM_001297986.1"/>
</dbReference>
<dbReference type="RefSeq" id="NP_511052.1">
    <property type="nucleotide sequence ID" value="NM_078497.4"/>
</dbReference>
<dbReference type="RefSeq" id="NP_727048.1">
    <property type="nucleotide sequence ID" value="NM_167053.2"/>
</dbReference>
<dbReference type="PDB" id="2HF3">
    <property type="method" value="X-ray"/>
    <property type="resolution" value="1.80 A"/>
    <property type="chains" value="A=3-376"/>
</dbReference>
<dbReference type="PDB" id="2HF4">
    <property type="method" value="X-ray"/>
    <property type="resolution" value="1.80 A"/>
    <property type="chains" value="A=3-376"/>
</dbReference>
<dbReference type="PDB" id="3EKS">
    <property type="method" value="X-ray"/>
    <property type="resolution" value="1.80 A"/>
    <property type="chains" value="A=2-376"/>
</dbReference>
<dbReference type="PDB" id="3EKU">
    <property type="method" value="X-ray"/>
    <property type="resolution" value="2.50 A"/>
    <property type="chains" value="A=2-376"/>
</dbReference>
<dbReference type="PDB" id="3EL2">
    <property type="method" value="X-ray"/>
    <property type="resolution" value="2.50 A"/>
    <property type="chains" value="A=2-376"/>
</dbReference>
<dbReference type="PDB" id="3MMV">
    <property type="method" value="X-ray"/>
    <property type="resolution" value="2.80 A"/>
    <property type="chains" value="A=3-376"/>
</dbReference>
<dbReference type="PDB" id="3MN6">
    <property type="method" value="X-ray"/>
    <property type="resolution" value="2.00 A"/>
    <property type="chains" value="A/F/K=3-376"/>
</dbReference>
<dbReference type="PDB" id="3MN7">
    <property type="method" value="X-ray"/>
    <property type="resolution" value="2.00 A"/>
    <property type="chains" value="A=3-376"/>
</dbReference>
<dbReference type="PDB" id="3MN9">
    <property type="method" value="X-ray"/>
    <property type="resolution" value="2.00 A"/>
    <property type="chains" value="A=3-376"/>
</dbReference>
<dbReference type="PDB" id="4JHD">
    <property type="method" value="X-ray"/>
    <property type="resolution" value="2.91 A"/>
    <property type="chains" value="A/B/D/E=1-376"/>
</dbReference>
<dbReference type="PDB" id="4M63">
    <property type="method" value="X-ray"/>
    <property type="resolution" value="2.75 A"/>
    <property type="chains" value="C/D/E=1-376"/>
</dbReference>
<dbReference type="PDB" id="4RWT">
    <property type="method" value="X-ray"/>
    <property type="resolution" value="2.98 A"/>
    <property type="chains" value="A/B=1-376"/>
</dbReference>
<dbReference type="PDB" id="5WFN">
    <property type="method" value="X-ray"/>
    <property type="resolution" value="3.00 A"/>
    <property type="chains" value="A/B=1-376"/>
</dbReference>
<dbReference type="PDB" id="8OH4">
    <property type="method" value="EM"/>
    <property type="resolution" value="16.50 A"/>
    <property type="chains" value="A/B/C/D/E/F/G/H=7-376"/>
</dbReference>
<dbReference type="PDBsum" id="2HF3"/>
<dbReference type="PDBsum" id="2HF4"/>
<dbReference type="PDBsum" id="3EKS"/>
<dbReference type="PDBsum" id="3EKU"/>
<dbReference type="PDBsum" id="3EL2"/>
<dbReference type="PDBsum" id="3MMV"/>
<dbReference type="PDBsum" id="3MN6"/>
<dbReference type="PDBsum" id="3MN7"/>
<dbReference type="PDBsum" id="3MN9"/>
<dbReference type="PDBsum" id="4JHD"/>
<dbReference type="PDBsum" id="4M63"/>
<dbReference type="PDBsum" id="4RWT"/>
<dbReference type="PDBsum" id="5WFN"/>
<dbReference type="PDBsum" id="8OH4"/>
<dbReference type="EMDB" id="EMD-16877"/>
<dbReference type="SMR" id="P10987"/>
<dbReference type="BioGRID" id="58020">
    <property type="interactions" value="96"/>
</dbReference>
<dbReference type="ComplexPortal" id="CPX-2346">
    <property type="entry name" value="Non-canonical BRAHMA-associated SWI/SNF ATP-dependent chromatin remodeling complex"/>
</dbReference>
<dbReference type="ComplexPortal" id="CPX-2383">
    <property type="entry name" value="Polybromo-containing BRAHMA associated proteins complex"/>
</dbReference>
<dbReference type="ComplexPortal" id="CPX-2693">
    <property type="entry name" value="INO80 chromatin remodeling complex"/>
</dbReference>
<dbReference type="ComplexPortal" id="CPX-2746">
    <property type="entry name" value="Brahma SWI/SNF ATP-dependent chromatin remodeling complex"/>
</dbReference>
<dbReference type="DIP" id="DIP-18961N"/>
<dbReference type="ELM" id="P10987"/>
<dbReference type="FunCoup" id="P10987">
    <property type="interactions" value="1192"/>
</dbReference>
<dbReference type="IntAct" id="P10987">
    <property type="interactions" value="38"/>
</dbReference>
<dbReference type="MINT" id="P10987"/>
<dbReference type="STRING" id="7227.FBpp0311818"/>
<dbReference type="MetOSite" id="P10987"/>
<dbReference type="PaxDb" id="7227-FBpp0100124"/>
<dbReference type="EnsemblMetazoa" id="FBtr0070822">
    <property type="protein sequence ID" value="FBpp0070787"/>
    <property type="gene ID" value="FBgn0000042"/>
</dbReference>
<dbReference type="EnsemblMetazoa" id="FBtr0070823">
    <property type="protein sequence ID" value="FBpp0070788"/>
    <property type="gene ID" value="FBgn0000042"/>
</dbReference>
<dbReference type="EnsemblMetazoa" id="FBtr0100662">
    <property type="protein sequence ID" value="FBpp0100124"/>
    <property type="gene ID" value="FBgn0000042"/>
</dbReference>
<dbReference type="EnsemblMetazoa" id="FBtr0100663">
    <property type="protein sequence ID" value="FBpp0100125"/>
    <property type="gene ID" value="FBgn0000042"/>
</dbReference>
<dbReference type="EnsemblMetazoa" id="FBtr0345894">
    <property type="protein sequence ID" value="FBpp0311818"/>
    <property type="gene ID" value="FBgn0000042"/>
</dbReference>
<dbReference type="GeneID" id="31521"/>
<dbReference type="KEGG" id="dme:Dmel_CG4027"/>
<dbReference type="AGR" id="FB:FBgn0000042"/>
<dbReference type="CTD" id="31521"/>
<dbReference type="FlyBase" id="FBgn0000042">
    <property type="gene designation" value="Act5C"/>
</dbReference>
<dbReference type="VEuPathDB" id="VectorBase:FBgn0000042"/>
<dbReference type="eggNOG" id="KOG0676">
    <property type="taxonomic scope" value="Eukaryota"/>
</dbReference>
<dbReference type="HOGENOM" id="CLU_027965_0_2_1"/>
<dbReference type="InParanoid" id="P10987"/>
<dbReference type="OMA" id="FHTTAER"/>
<dbReference type="OrthoDB" id="422673at2759"/>
<dbReference type="PhylomeDB" id="P10987"/>
<dbReference type="Reactome" id="R-DME-114608">
    <property type="pathway name" value="Platelet degranulation"/>
</dbReference>
<dbReference type="Reactome" id="R-DME-190873">
    <property type="pathway name" value="Gap junction degradation"/>
</dbReference>
<dbReference type="Reactome" id="R-DME-196025">
    <property type="pathway name" value="Formation of annular gap junctions"/>
</dbReference>
<dbReference type="Reactome" id="R-DME-2029482">
    <property type="pathway name" value="Regulation of actin dynamics for phagocytic cup formation"/>
</dbReference>
<dbReference type="Reactome" id="R-DME-3928662">
    <property type="pathway name" value="EPHB-mediated forward signaling"/>
</dbReference>
<dbReference type="Reactome" id="R-DME-3928665">
    <property type="pathway name" value="EPH-ephrin mediated repulsion of cells"/>
</dbReference>
<dbReference type="Reactome" id="R-DME-4420097">
    <property type="pathway name" value="VEGFA-VEGFR2 Pathway"/>
</dbReference>
<dbReference type="Reactome" id="R-DME-446353">
    <property type="pathway name" value="Cell-extracellular matrix interactions"/>
</dbReference>
<dbReference type="Reactome" id="R-DME-5663213">
    <property type="pathway name" value="RHO GTPases Activate WASPs and WAVEs"/>
</dbReference>
<dbReference type="Reactome" id="R-DME-5674135">
    <property type="pathway name" value="MAP2K and MAPK activation"/>
</dbReference>
<dbReference type="Reactome" id="R-DME-5689603">
    <property type="pathway name" value="UCH proteinases"/>
</dbReference>
<dbReference type="Reactome" id="R-DME-5696394">
    <property type="pathway name" value="DNA Damage Recognition in GG-NER"/>
</dbReference>
<dbReference type="Reactome" id="R-DME-8856828">
    <property type="pathway name" value="Clathrin-mediated endocytosis"/>
</dbReference>
<dbReference type="Reactome" id="R-DME-9013418">
    <property type="pathway name" value="RHOBTB2 GTPase cycle"/>
</dbReference>
<dbReference type="Reactome" id="R-DME-9035034">
    <property type="pathway name" value="RHOF GTPase cycle"/>
</dbReference>
<dbReference type="SignaLink" id="P10987"/>
<dbReference type="BioGRID-ORCS" id="31521">
    <property type="hits" value="0 hits in 3 CRISPR screens"/>
</dbReference>
<dbReference type="ChiTaRS" id="Act5C">
    <property type="organism name" value="fly"/>
</dbReference>
<dbReference type="EvolutionaryTrace" id="P10987"/>
<dbReference type="GenomeRNAi" id="31521"/>
<dbReference type="PRO" id="PR:P10987"/>
<dbReference type="Proteomes" id="UP000000803">
    <property type="component" value="Chromosome X"/>
</dbReference>
<dbReference type="Bgee" id="FBgn0000042">
    <property type="expression patterns" value="Expressed in cleaving embryo and 299 other cell types or tissues"/>
</dbReference>
<dbReference type="ExpressionAtlas" id="P10987">
    <property type="expression patterns" value="baseline and differential"/>
</dbReference>
<dbReference type="GO" id="GO:0015629">
    <property type="term" value="C:actin cytoskeleton"/>
    <property type="evidence" value="ECO:0000318"/>
    <property type="project" value="GO_Central"/>
</dbReference>
<dbReference type="GO" id="GO:0035060">
    <property type="term" value="C:brahma complex"/>
    <property type="evidence" value="ECO:0000314"/>
    <property type="project" value="FlyBase"/>
</dbReference>
<dbReference type="GO" id="GO:0005737">
    <property type="term" value="C:cytoplasm"/>
    <property type="evidence" value="ECO:0007669"/>
    <property type="project" value="UniProtKB-KW"/>
</dbReference>
<dbReference type="GO" id="GO:0031011">
    <property type="term" value="C:Ino80 complex"/>
    <property type="evidence" value="ECO:0000314"/>
    <property type="project" value="FlyBase"/>
</dbReference>
<dbReference type="GO" id="GO:0005524">
    <property type="term" value="F:ATP binding"/>
    <property type="evidence" value="ECO:0007669"/>
    <property type="project" value="UniProtKB-KW"/>
</dbReference>
<dbReference type="GO" id="GO:0016787">
    <property type="term" value="F:hydrolase activity"/>
    <property type="evidence" value="ECO:0007669"/>
    <property type="project" value="UniProtKB-KW"/>
</dbReference>
<dbReference type="GO" id="GO:0006338">
    <property type="term" value="P:chromatin remodeling"/>
    <property type="evidence" value="ECO:0000305"/>
    <property type="project" value="FlyBase"/>
</dbReference>
<dbReference type="GO" id="GO:0032507">
    <property type="term" value="P:maintenance of protein location in cell"/>
    <property type="evidence" value="ECO:0000315"/>
    <property type="project" value="FlyBase"/>
</dbReference>
<dbReference type="GO" id="GO:0000281">
    <property type="term" value="P:mitotic cytokinesis"/>
    <property type="evidence" value="ECO:0000315"/>
    <property type="project" value="FlyBase"/>
</dbReference>
<dbReference type="GO" id="GO:0030723">
    <property type="term" value="P:ovarian fusome organization"/>
    <property type="evidence" value="ECO:0000270"/>
    <property type="project" value="UniProtKB"/>
</dbReference>
<dbReference type="GO" id="GO:0007291">
    <property type="term" value="P:sperm individualization"/>
    <property type="evidence" value="ECO:0000270"/>
    <property type="project" value="FlyBase"/>
</dbReference>
<dbReference type="GO" id="GO:0035148">
    <property type="term" value="P:tube formation"/>
    <property type="evidence" value="ECO:0000316"/>
    <property type="project" value="FlyBase"/>
</dbReference>
<dbReference type="CDD" id="cd10224">
    <property type="entry name" value="ASKHA_NBD_actin"/>
    <property type="match status" value="1"/>
</dbReference>
<dbReference type="FunFam" id="3.30.420.40:FF:000131">
    <property type="entry name" value="Actin, alpha skeletal muscle"/>
    <property type="match status" value="1"/>
</dbReference>
<dbReference type="FunFam" id="3.30.420.40:FF:000291">
    <property type="entry name" value="Actin, alpha skeletal muscle"/>
    <property type="match status" value="1"/>
</dbReference>
<dbReference type="FunFam" id="3.90.640.10:FF:000047">
    <property type="entry name" value="Actin, alpha skeletal muscle"/>
    <property type="match status" value="1"/>
</dbReference>
<dbReference type="FunFam" id="3.30.420.40:FF:000058">
    <property type="entry name" value="Putative actin-related protein 5"/>
    <property type="match status" value="1"/>
</dbReference>
<dbReference type="Gene3D" id="3.30.420.40">
    <property type="match status" value="2"/>
</dbReference>
<dbReference type="Gene3D" id="3.90.640.10">
    <property type="entry name" value="Actin, Chain A, domain 4"/>
    <property type="match status" value="1"/>
</dbReference>
<dbReference type="InterPro" id="IPR004000">
    <property type="entry name" value="Actin"/>
</dbReference>
<dbReference type="InterPro" id="IPR020902">
    <property type="entry name" value="Actin/actin-like_CS"/>
</dbReference>
<dbReference type="InterPro" id="IPR004001">
    <property type="entry name" value="Actin_CS"/>
</dbReference>
<dbReference type="InterPro" id="IPR043129">
    <property type="entry name" value="ATPase_NBD"/>
</dbReference>
<dbReference type="PANTHER" id="PTHR11937">
    <property type="entry name" value="ACTIN"/>
    <property type="match status" value="1"/>
</dbReference>
<dbReference type="Pfam" id="PF00022">
    <property type="entry name" value="Actin"/>
    <property type="match status" value="1"/>
</dbReference>
<dbReference type="PRINTS" id="PR00190">
    <property type="entry name" value="ACTIN"/>
</dbReference>
<dbReference type="SMART" id="SM00268">
    <property type="entry name" value="ACTIN"/>
    <property type="match status" value="1"/>
</dbReference>
<dbReference type="SUPFAM" id="SSF53067">
    <property type="entry name" value="Actin-like ATPase domain"/>
    <property type="match status" value="2"/>
</dbReference>
<dbReference type="PROSITE" id="PS00406">
    <property type="entry name" value="ACTINS_1"/>
    <property type="match status" value="1"/>
</dbReference>
<dbReference type="PROSITE" id="PS00432">
    <property type="entry name" value="ACTINS_2"/>
    <property type="match status" value="1"/>
</dbReference>
<dbReference type="PROSITE" id="PS01132">
    <property type="entry name" value="ACTINS_ACT_LIKE"/>
    <property type="match status" value="1"/>
</dbReference>
<protein>
    <recommendedName>
        <fullName>Actin-5C</fullName>
        <ecNumber evidence="4">3.6.4.-</ecNumber>
    </recommendedName>
</protein>
<comment type="function">
    <text>Actins are highly conserved proteins that are involved in various types of cell motility and are ubiquitously expressed in all eukaryotic cells.</text>
</comment>
<comment type="function">
    <text>Multiple isoforms are involved in various cellular functions such as cytoskeleton structure, cell mobility, chromosome movement and muscle contraction.</text>
</comment>
<comment type="catalytic activity">
    <reaction evidence="4">
        <text>ATP + H2O = ADP + phosphate + H(+)</text>
        <dbReference type="Rhea" id="RHEA:13065"/>
        <dbReference type="ChEBI" id="CHEBI:15377"/>
        <dbReference type="ChEBI" id="CHEBI:15378"/>
        <dbReference type="ChEBI" id="CHEBI:30616"/>
        <dbReference type="ChEBI" id="CHEBI:43474"/>
        <dbReference type="ChEBI" id="CHEBI:456216"/>
    </reaction>
</comment>
<comment type="subunit">
    <text evidence="6">Interacts with Rab6.</text>
</comment>
<comment type="interaction">
    <interactant intactId="EBI-130188">
        <id>P10987</id>
    </interactant>
    <interactant intactId="EBI-3431623">
        <id>Q9U1K1-1</id>
        <label>spir</label>
    </interactant>
    <organismsDiffer>false</organismsDiffer>
    <experiments>6</experiments>
</comment>
<comment type="subcellular location">
    <subcellularLocation>
        <location evidence="7">Cytoplasm</location>
        <location evidence="7">Cytoskeleton</location>
    </subcellularLocation>
    <text evidence="7">Associated with spectrosomes during female cystocyte proliferation and differentiation, but dissociates, or becomes undetectable, upon fusome maturation (PubMed:9344535). Component of the inner rim of ring canals connecting the cytoplasm of nurse cells and oocyte during oogenesis (PubMed:9344535).</text>
</comment>
<comment type="PTM">
    <text evidence="3">N-terminal cleavage of acetylated cysteine of immature actin by ACTMAP.</text>
</comment>
<comment type="PTM">
    <text evidence="5">Oxidation of Met-45 by Mical to form methionine sulfoxide promotes actin filament depolymerization. Methionine sulfoxide is produced stereospecifically, but it is not known whether the (S)-S-oxide or the (R)-S-oxide is produced.</text>
</comment>
<comment type="miscellaneous">
    <text>In Drosophila there are 6 closely related actin genes.</text>
</comment>
<comment type="similarity">
    <text evidence="8">Belongs to the actin family.</text>
</comment>
<reference key="1">
    <citation type="submission" date="1987-12" db="EMBL/GenBank/DDBJ databases">
        <authorList>
            <person name="Fyrberg E.A."/>
            <person name="Bond B.J."/>
            <person name="Hershey N.D."/>
            <person name="Mixter K.S."/>
            <person name="Davidson N."/>
        </authorList>
    </citation>
    <scope>NUCLEOTIDE SEQUENCE [GENOMIC DNA]</scope>
</reference>
<reference key="2">
    <citation type="journal article" date="2000" name="Science">
        <title>The genome sequence of Drosophila melanogaster.</title>
        <authorList>
            <person name="Adams M.D."/>
            <person name="Celniker S.E."/>
            <person name="Holt R.A."/>
            <person name="Evans C.A."/>
            <person name="Gocayne J.D."/>
            <person name="Amanatides P.G."/>
            <person name="Scherer S.E."/>
            <person name="Li P.W."/>
            <person name="Hoskins R.A."/>
            <person name="Galle R.F."/>
            <person name="George R.A."/>
            <person name="Lewis S.E."/>
            <person name="Richards S."/>
            <person name="Ashburner M."/>
            <person name="Henderson S.N."/>
            <person name="Sutton G.G."/>
            <person name="Wortman J.R."/>
            <person name="Yandell M.D."/>
            <person name="Zhang Q."/>
            <person name="Chen L.X."/>
            <person name="Brandon R.C."/>
            <person name="Rogers Y.-H.C."/>
            <person name="Blazej R.G."/>
            <person name="Champe M."/>
            <person name="Pfeiffer B.D."/>
            <person name="Wan K.H."/>
            <person name="Doyle C."/>
            <person name="Baxter E.G."/>
            <person name="Helt G."/>
            <person name="Nelson C.R."/>
            <person name="Miklos G.L.G."/>
            <person name="Abril J.F."/>
            <person name="Agbayani A."/>
            <person name="An H.-J."/>
            <person name="Andrews-Pfannkoch C."/>
            <person name="Baldwin D."/>
            <person name="Ballew R.M."/>
            <person name="Basu A."/>
            <person name="Baxendale J."/>
            <person name="Bayraktaroglu L."/>
            <person name="Beasley E.M."/>
            <person name="Beeson K.Y."/>
            <person name="Benos P.V."/>
            <person name="Berman B.P."/>
            <person name="Bhandari D."/>
            <person name="Bolshakov S."/>
            <person name="Borkova D."/>
            <person name="Botchan M.R."/>
            <person name="Bouck J."/>
            <person name="Brokstein P."/>
            <person name="Brottier P."/>
            <person name="Burtis K.C."/>
            <person name="Busam D.A."/>
            <person name="Butler H."/>
            <person name="Cadieu E."/>
            <person name="Center A."/>
            <person name="Chandra I."/>
            <person name="Cherry J.M."/>
            <person name="Cawley S."/>
            <person name="Dahlke C."/>
            <person name="Davenport L.B."/>
            <person name="Davies P."/>
            <person name="de Pablos B."/>
            <person name="Delcher A."/>
            <person name="Deng Z."/>
            <person name="Mays A.D."/>
            <person name="Dew I."/>
            <person name="Dietz S.M."/>
            <person name="Dodson K."/>
            <person name="Doup L.E."/>
            <person name="Downes M."/>
            <person name="Dugan-Rocha S."/>
            <person name="Dunkov B.C."/>
            <person name="Dunn P."/>
            <person name="Durbin K.J."/>
            <person name="Evangelista C.C."/>
            <person name="Ferraz C."/>
            <person name="Ferriera S."/>
            <person name="Fleischmann W."/>
            <person name="Fosler C."/>
            <person name="Gabrielian A.E."/>
            <person name="Garg N.S."/>
            <person name="Gelbart W.M."/>
            <person name="Glasser K."/>
            <person name="Glodek A."/>
            <person name="Gong F."/>
            <person name="Gorrell J.H."/>
            <person name="Gu Z."/>
            <person name="Guan P."/>
            <person name="Harris M."/>
            <person name="Harris N.L."/>
            <person name="Harvey D.A."/>
            <person name="Heiman T.J."/>
            <person name="Hernandez J.R."/>
            <person name="Houck J."/>
            <person name="Hostin D."/>
            <person name="Houston K.A."/>
            <person name="Howland T.J."/>
            <person name="Wei M.-H."/>
            <person name="Ibegwam C."/>
            <person name="Jalali M."/>
            <person name="Kalush F."/>
            <person name="Karpen G.H."/>
            <person name="Ke Z."/>
            <person name="Kennison J.A."/>
            <person name="Ketchum K.A."/>
            <person name="Kimmel B.E."/>
            <person name="Kodira C.D."/>
            <person name="Kraft C.L."/>
            <person name="Kravitz S."/>
            <person name="Kulp D."/>
            <person name="Lai Z."/>
            <person name="Lasko P."/>
            <person name="Lei Y."/>
            <person name="Levitsky A.A."/>
            <person name="Li J.H."/>
            <person name="Li Z."/>
            <person name="Liang Y."/>
            <person name="Lin X."/>
            <person name="Liu X."/>
            <person name="Mattei B."/>
            <person name="McIntosh T.C."/>
            <person name="McLeod M.P."/>
            <person name="McPherson D."/>
            <person name="Merkulov G."/>
            <person name="Milshina N.V."/>
            <person name="Mobarry C."/>
            <person name="Morris J."/>
            <person name="Moshrefi A."/>
            <person name="Mount S.M."/>
            <person name="Moy M."/>
            <person name="Murphy B."/>
            <person name="Murphy L."/>
            <person name="Muzny D.M."/>
            <person name="Nelson D.L."/>
            <person name="Nelson D.R."/>
            <person name="Nelson K.A."/>
            <person name="Nixon K."/>
            <person name="Nusskern D.R."/>
            <person name="Pacleb J.M."/>
            <person name="Palazzolo M."/>
            <person name="Pittman G.S."/>
            <person name="Pan S."/>
            <person name="Pollard J."/>
            <person name="Puri V."/>
            <person name="Reese M.G."/>
            <person name="Reinert K."/>
            <person name="Remington K."/>
            <person name="Saunders R.D.C."/>
            <person name="Scheeler F."/>
            <person name="Shen H."/>
            <person name="Shue B.C."/>
            <person name="Siden-Kiamos I."/>
            <person name="Simpson M."/>
            <person name="Skupski M.P."/>
            <person name="Smith T.J."/>
            <person name="Spier E."/>
            <person name="Spradling A.C."/>
            <person name="Stapleton M."/>
            <person name="Strong R."/>
            <person name="Sun E."/>
            <person name="Svirskas R."/>
            <person name="Tector C."/>
            <person name="Turner R."/>
            <person name="Venter E."/>
            <person name="Wang A.H."/>
            <person name="Wang X."/>
            <person name="Wang Z.-Y."/>
            <person name="Wassarman D.A."/>
            <person name="Weinstock G.M."/>
            <person name="Weissenbach J."/>
            <person name="Williams S.M."/>
            <person name="Woodage T."/>
            <person name="Worley K.C."/>
            <person name="Wu D."/>
            <person name="Yang S."/>
            <person name="Yao Q.A."/>
            <person name="Ye J."/>
            <person name="Yeh R.-F."/>
            <person name="Zaveri J.S."/>
            <person name="Zhan M."/>
            <person name="Zhang G."/>
            <person name="Zhao Q."/>
            <person name="Zheng L."/>
            <person name="Zheng X.H."/>
            <person name="Zhong F.N."/>
            <person name="Zhong W."/>
            <person name="Zhou X."/>
            <person name="Zhu S.C."/>
            <person name="Zhu X."/>
            <person name="Smith H.O."/>
            <person name="Gibbs R.A."/>
            <person name="Myers E.W."/>
            <person name="Rubin G.M."/>
            <person name="Venter J.C."/>
        </authorList>
    </citation>
    <scope>NUCLEOTIDE SEQUENCE [LARGE SCALE GENOMIC DNA]</scope>
    <source>
        <strain>Berkeley</strain>
    </source>
</reference>
<reference key="3">
    <citation type="journal article" date="2002" name="Genome Biol.">
        <title>Annotation of the Drosophila melanogaster euchromatic genome: a systematic review.</title>
        <authorList>
            <person name="Misra S."/>
            <person name="Crosby M.A."/>
            <person name="Mungall C.J."/>
            <person name="Matthews B.B."/>
            <person name="Campbell K.S."/>
            <person name="Hradecky P."/>
            <person name="Huang Y."/>
            <person name="Kaminker J.S."/>
            <person name="Millburn G.H."/>
            <person name="Prochnik S.E."/>
            <person name="Smith C.D."/>
            <person name="Tupy J.L."/>
            <person name="Whitfield E.J."/>
            <person name="Bayraktaroglu L."/>
            <person name="Berman B.P."/>
            <person name="Bettencourt B.R."/>
            <person name="Celniker S.E."/>
            <person name="de Grey A.D.N.J."/>
            <person name="Drysdale R.A."/>
            <person name="Harris N.L."/>
            <person name="Richter J."/>
            <person name="Russo S."/>
            <person name="Schroeder A.J."/>
            <person name="Shu S.Q."/>
            <person name="Stapleton M."/>
            <person name="Yamada C."/>
            <person name="Ashburner M."/>
            <person name="Gelbart W.M."/>
            <person name="Rubin G.M."/>
            <person name="Lewis S.E."/>
        </authorList>
    </citation>
    <scope>GENOME REANNOTATION</scope>
    <source>
        <strain>Berkeley</strain>
    </source>
</reference>
<reference key="4">
    <citation type="journal article" date="2002" name="Genome Biol.">
        <title>A Drosophila full-length cDNA resource.</title>
        <authorList>
            <person name="Stapleton M."/>
            <person name="Carlson J.W."/>
            <person name="Brokstein P."/>
            <person name="Yu C."/>
            <person name="Champe M."/>
            <person name="George R.A."/>
            <person name="Guarin H."/>
            <person name="Kronmiller B."/>
            <person name="Pacleb J.M."/>
            <person name="Park S."/>
            <person name="Wan K.H."/>
            <person name="Rubin G.M."/>
            <person name="Celniker S.E."/>
        </authorList>
    </citation>
    <scope>NUCLEOTIDE SEQUENCE [LARGE SCALE MRNA]</scope>
    <source>
        <strain>Berkeley</strain>
        <tissue>Embryo</tissue>
    </source>
</reference>
<reference key="5">
    <citation type="journal article" date="1987" name="Genes Dev.">
        <title>Stage-specific selection of alternative transcriptional initiation sites from the 5C actin gene of Drosophila melanogaster.</title>
        <authorList>
            <person name="Vigoreaux J.O."/>
            <person name="Tobin S.L."/>
        </authorList>
    </citation>
    <scope>NUCLEOTIDE SEQUENCE [GENOMIC DNA] OF 1-84 AND 324-376</scope>
</reference>
<reference key="6">
    <citation type="journal article" date="1981" name="Cell">
        <title>The actin genes of Drosophila: protein coding regions are highly conserved but intron positions are not.</title>
        <authorList>
            <person name="Fyrberg E.A."/>
            <person name="Bond B.J."/>
            <person name="Hershey N.D."/>
            <person name="Mixter K.S."/>
            <person name="Davidson N."/>
        </authorList>
    </citation>
    <scope>NUCLEOTIDE SEQUENCE [GENOMIC DNA] OF 1-75</scope>
</reference>
<reference key="7">
    <citation type="journal article" date="1986" name="Mol. Cell. Biol.">
        <title>The Drosophila melanogaster actin 5C gene uses two transcription initiation sites and three polyadenylation sites to express multiple mRNA species.</title>
        <authorList>
            <person name="Bond B.J."/>
            <person name="Davidson N."/>
        </authorList>
    </citation>
    <scope>NUCLEOTIDE SEQUENCE [GENOMIC DNA] OF 1-12</scope>
</reference>
<reference key="8">
    <citation type="journal article" date="1988" name="Biochim. Biophys. Acta">
        <title>Transcriptional activity at the 3' end of the actin gene at 5C on the X chromosome of Drosophila melanogaster.</title>
        <authorList>
            <person name="Rao J.P."/>
            <person name="Zafar R.S."/>
            <person name="Sodja A."/>
        </authorList>
    </citation>
    <scope>NUCLEOTIDE SEQUENCE [GENOMIC DNA] OF 366-376</scope>
    <source>
        <strain>Canton-S</strain>
    </source>
</reference>
<reference key="9">
    <citation type="journal article" date="1997" name="Dev. Biol.">
        <title>The Drosophila ovarian tumor gene is required for the organization of actin filaments during multiple stages in oogenesis.</title>
        <authorList>
            <person name="Rodesch C."/>
            <person name="Pettus J."/>
            <person name="Nagoshi R.N."/>
        </authorList>
    </citation>
    <scope>SUBCELLULAR LOCATION</scope>
</reference>
<reference key="10">
    <citation type="journal article" date="2011" name="Science">
        <title>Direct redox regulation of F-actin assembly and disassembly by Mical.</title>
        <authorList>
            <person name="Hung R.J."/>
            <person name="Pak C.W."/>
            <person name="Terman J.R."/>
        </authorList>
    </citation>
    <scope>OXIDATION AT MET-45 AND MET-48</scope>
    <scope>MUTAGENESIS OF MET-45 AND MET-48</scope>
</reference>
<reference key="11">
    <citation type="journal article" date="2012" name="J. Proteome Res.">
        <title>Involvement of Rab6 in the regulation of phagocytosis against virus infection in invertebrates.</title>
        <authorList>
            <person name="Ye T."/>
            <person name="Tang W."/>
            <person name="Zhang X."/>
        </authorList>
    </citation>
    <scope>INTERACTION WITH RAB6</scope>
</reference>
<sequence length="376" mass="41822">MCDEEVAALVVDNGSGMCKAGFAGDDAPRAVFPSIVGRPRHQGVMVGMGQKDSYVGDEAQSKRGILTLKYPIEHGIVTNWDDMEKIWHHTFYNELRVAPEEHPVLLTEAPLNPKANREKMTQIMFETFNTPAMYVAIQAVLSLYASGRTTGIVLDSGDGVSHTVPIYEGYALPHAILRLDLAGRDLTDYLMKILTERGYSFTTTAEREIVRDIKEKLCYVALDFEQEMATAASSSSLEKSYELPDGQVITIGNERFRCPEALFQPSFLGMEACGIHETTYNSIMKCDVDIRKDLYANTVLSGGTTMYPGIADRMQKEITALAPSTMKIKIIAPPERKYSVWIGGSILASLSTFQQMWISKQEYDESGPSIVHRKCF</sequence>
<name>ACT1_DROME</name>
<gene>
    <name type="primary">Act5C</name>
    <name type="ORF">CG4027</name>
</gene>